<protein>
    <recommendedName>
        <fullName evidence="1">Eukaryotic translation initiation factor 3 subunit F-1</fullName>
        <shortName evidence="1">eIF3f-1</shortName>
    </recommendedName>
    <alternativeName>
        <fullName evidence="1">Eukaryotic translation initiation factor 3 subunit 5-1</fullName>
    </alternativeName>
</protein>
<evidence type="ECO:0000255" key="1">
    <source>
        <dbReference type="HAMAP-Rule" id="MF_03005"/>
    </source>
</evidence>
<evidence type="ECO:0000255" key="2">
    <source>
        <dbReference type="PROSITE-ProRule" id="PRU01182"/>
    </source>
</evidence>
<comment type="function">
    <text evidence="1">Component of the eukaryotic translation initiation factor 3 (eIF-3) complex, which is involved in protein synthesis of a specialized repertoire of mRNAs and, together with other initiation factors, stimulates binding of mRNA and methionyl-tRNAi to the 40S ribosome. The eIF-3 complex specifically targets and initiates translation of a subset of mRNAs involved in cell proliferation.</text>
</comment>
<comment type="subunit">
    <text evidence="1">Component of the eukaryotic translation initiation factor 3 (eIF-3) complex. The eIF-3 complex interacts with pix.</text>
</comment>
<comment type="subcellular location">
    <subcellularLocation>
        <location evidence="1">Cytoplasm</location>
    </subcellularLocation>
</comment>
<comment type="similarity">
    <text evidence="1">Belongs to the eIF-3 subunit F family.</text>
</comment>
<feature type="chain" id="PRO_0000364307" description="Eukaryotic translation initiation factor 3 subunit F-1">
    <location>
        <begin position="1"/>
        <end position="280"/>
    </location>
</feature>
<feature type="domain" description="MPN" evidence="2">
    <location>
        <begin position="8"/>
        <end position="138"/>
    </location>
</feature>
<sequence length="280" mass="31112">MSALNLTVRVHPVVLFQVVDAFERRNAESHRVIGTLLGSVEKGVVEVTNCFCVPHKEHDDQVEAELSYALDMYDLNRKVNSNEAVVGWWATGNDVTNHSSVIHEYYARECNNPVHLTVDTSLQGGRMGLRSYVCIQLGVPGGKTGCMFTPIPVELTSYEPETFGLKLLQKTVGVAPANRPKTVPPMLDLAQISEASTKLQSLLDLILKYVDDVIAHKVTPDNAVGRQLLDLIHSVPHMSHEQFTQMFNANVRNLLMVITLSQLIKTQLQLNEKLTFLPTA</sequence>
<name>EI3F1_DROPE</name>
<proteinExistence type="inferred from homology"/>
<accession>B4GDU3</accession>
<dbReference type="EMBL" id="CH479182">
    <property type="protein sequence ID" value="EDW34604.1"/>
    <property type="molecule type" value="Genomic_DNA"/>
</dbReference>
<dbReference type="SMR" id="B4GDU3"/>
<dbReference type="STRING" id="7234.B4GDU3"/>
<dbReference type="EnsemblMetazoa" id="FBtr0187103">
    <property type="protein sequence ID" value="FBpp0185595"/>
    <property type="gene ID" value="FBgn0159081"/>
</dbReference>
<dbReference type="EnsemblMetazoa" id="XM_002017468.2">
    <property type="protein sequence ID" value="XP_002017504.1"/>
    <property type="gene ID" value="LOC6591962"/>
</dbReference>
<dbReference type="GeneID" id="6591962"/>
<dbReference type="KEGG" id="dpe:6591962"/>
<dbReference type="CTD" id="40587"/>
<dbReference type="eggNOG" id="KOG2975">
    <property type="taxonomic scope" value="Eukaryota"/>
</dbReference>
<dbReference type="HOGENOM" id="CLU_027018_0_1_1"/>
<dbReference type="OMA" id="EYFVHFH"/>
<dbReference type="OrthoDB" id="25498at2759"/>
<dbReference type="PhylomeDB" id="B4GDU3"/>
<dbReference type="Proteomes" id="UP000008744">
    <property type="component" value="Unassembled WGS sequence"/>
</dbReference>
<dbReference type="GO" id="GO:0016282">
    <property type="term" value="C:eukaryotic 43S preinitiation complex"/>
    <property type="evidence" value="ECO:0007669"/>
    <property type="project" value="UniProtKB-UniRule"/>
</dbReference>
<dbReference type="GO" id="GO:0033290">
    <property type="term" value="C:eukaryotic 48S preinitiation complex"/>
    <property type="evidence" value="ECO:0007669"/>
    <property type="project" value="UniProtKB-UniRule"/>
</dbReference>
<dbReference type="GO" id="GO:0071541">
    <property type="term" value="C:eukaryotic translation initiation factor 3 complex, eIF3m"/>
    <property type="evidence" value="ECO:0007669"/>
    <property type="project" value="TreeGrafter"/>
</dbReference>
<dbReference type="GO" id="GO:0140492">
    <property type="term" value="F:metal-dependent deubiquitinase activity"/>
    <property type="evidence" value="ECO:0007669"/>
    <property type="project" value="EnsemblMetazoa"/>
</dbReference>
<dbReference type="GO" id="GO:0003743">
    <property type="term" value="F:translation initiation factor activity"/>
    <property type="evidence" value="ECO:0007669"/>
    <property type="project" value="UniProtKB-UniRule"/>
</dbReference>
<dbReference type="GO" id="GO:0031369">
    <property type="term" value="F:translation initiation factor binding"/>
    <property type="evidence" value="ECO:0007669"/>
    <property type="project" value="InterPro"/>
</dbReference>
<dbReference type="GO" id="GO:0140367">
    <property type="term" value="P:antibacterial innate immune response"/>
    <property type="evidence" value="ECO:0007669"/>
    <property type="project" value="EnsemblMetazoa"/>
</dbReference>
<dbReference type="GO" id="GO:0050829">
    <property type="term" value="P:defense response to Gram-negative bacterium"/>
    <property type="evidence" value="ECO:0007669"/>
    <property type="project" value="EnsemblMetazoa"/>
</dbReference>
<dbReference type="GO" id="GO:0001732">
    <property type="term" value="P:formation of cytoplasmic translation initiation complex"/>
    <property type="evidence" value="ECO:0007669"/>
    <property type="project" value="UniProtKB-UniRule"/>
</dbReference>
<dbReference type="GO" id="GO:0045747">
    <property type="term" value="P:positive regulation of Notch signaling pathway"/>
    <property type="evidence" value="ECO:0007669"/>
    <property type="project" value="EnsemblMetazoa"/>
</dbReference>
<dbReference type="GO" id="GO:0061059">
    <property type="term" value="P:positive regulation of peptidoglycan recognition protein signaling pathway"/>
    <property type="evidence" value="ECO:0007669"/>
    <property type="project" value="EnsemblMetazoa"/>
</dbReference>
<dbReference type="CDD" id="cd08064">
    <property type="entry name" value="MPN_eIF3f"/>
    <property type="match status" value="1"/>
</dbReference>
<dbReference type="FunFam" id="3.40.140.10:FF:000014">
    <property type="entry name" value="Eukaryotic translation initiation factor 3 subunit F"/>
    <property type="match status" value="1"/>
</dbReference>
<dbReference type="Gene3D" id="3.40.140.10">
    <property type="entry name" value="Cytidine Deaminase, domain 2"/>
    <property type="match status" value="1"/>
</dbReference>
<dbReference type="HAMAP" id="MF_03005">
    <property type="entry name" value="eIF3f"/>
    <property type="match status" value="1"/>
</dbReference>
<dbReference type="InterPro" id="IPR027531">
    <property type="entry name" value="eIF3f"/>
</dbReference>
<dbReference type="InterPro" id="IPR024969">
    <property type="entry name" value="EIF3F/CSN6-like_C"/>
</dbReference>
<dbReference type="InterPro" id="IPR000555">
    <property type="entry name" value="JAMM/MPN+_dom"/>
</dbReference>
<dbReference type="InterPro" id="IPR037518">
    <property type="entry name" value="MPN"/>
</dbReference>
<dbReference type="PANTHER" id="PTHR10540:SF6">
    <property type="entry name" value="EUKARYOTIC TRANSLATION INITIATION FACTOR 3 SUBUNIT F"/>
    <property type="match status" value="1"/>
</dbReference>
<dbReference type="PANTHER" id="PTHR10540">
    <property type="entry name" value="EUKARYOTIC TRANSLATION INITIATION FACTOR 3 SUBUNIT F-RELATED"/>
    <property type="match status" value="1"/>
</dbReference>
<dbReference type="Pfam" id="PF01398">
    <property type="entry name" value="JAB"/>
    <property type="match status" value="1"/>
</dbReference>
<dbReference type="Pfam" id="PF13012">
    <property type="entry name" value="MitMem_reg"/>
    <property type="match status" value="1"/>
</dbReference>
<dbReference type="SMART" id="SM00232">
    <property type="entry name" value="JAB_MPN"/>
    <property type="match status" value="1"/>
</dbReference>
<dbReference type="PROSITE" id="PS50249">
    <property type="entry name" value="MPN"/>
    <property type="match status" value="1"/>
</dbReference>
<reference key="1">
    <citation type="journal article" date="2007" name="Nature">
        <title>Evolution of genes and genomes on the Drosophila phylogeny.</title>
        <authorList>
            <consortium name="Drosophila 12 genomes consortium"/>
        </authorList>
    </citation>
    <scope>NUCLEOTIDE SEQUENCE [LARGE SCALE GENOMIC DNA]</scope>
    <source>
        <strain>MSH-3 / Tucson 14011-0111.49</strain>
    </source>
</reference>
<gene>
    <name evidence="1" type="primary">eIF3f1</name>
    <name evidence="1" type="synonym">eIF3-S5-1</name>
    <name type="ORF">GL21488</name>
</gene>
<keyword id="KW-0963">Cytoplasm</keyword>
<keyword id="KW-0396">Initiation factor</keyword>
<keyword id="KW-0648">Protein biosynthesis</keyword>
<keyword id="KW-1185">Reference proteome</keyword>
<organism>
    <name type="scientific">Drosophila persimilis</name>
    <name type="common">Fruit fly</name>
    <dbReference type="NCBI Taxonomy" id="7234"/>
    <lineage>
        <taxon>Eukaryota</taxon>
        <taxon>Metazoa</taxon>
        <taxon>Ecdysozoa</taxon>
        <taxon>Arthropoda</taxon>
        <taxon>Hexapoda</taxon>
        <taxon>Insecta</taxon>
        <taxon>Pterygota</taxon>
        <taxon>Neoptera</taxon>
        <taxon>Endopterygota</taxon>
        <taxon>Diptera</taxon>
        <taxon>Brachycera</taxon>
        <taxon>Muscomorpha</taxon>
        <taxon>Ephydroidea</taxon>
        <taxon>Drosophilidae</taxon>
        <taxon>Drosophila</taxon>
        <taxon>Sophophora</taxon>
    </lineage>
</organism>